<feature type="chain" id="PRO_1000006331" description="Serine hydroxymethyltransferase">
    <location>
        <begin position="1"/>
        <end position="418"/>
    </location>
</feature>
<feature type="binding site" evidence="1">
    <location>
        <position position="121"/>
    </location>
    <ligand>
        <name>(6S)-5,6,7,8-tetrahydrofolate</name>
        <dbReference type="ChEBI" id="CHEBI:57453"/>
    </ligand>
</feature>
<feature type="binding site" evidence="1">
    <location>
        <begin position="125"/>
        <end position="127"/>
    </location>
    <ligand>
        <name>(6S)-5,6,7,8-tetrahydrofolate</name>
        <dbReference type="ChEBI" id="CHEBI:57453"/>
    </ligand>
</feature>
<feature type="binding site" evidence="1">
    <location>
        <begin position="355"/>
        <end position="357"/>
    </location>
    <ligand>
        <name>(6S)-5,6,7,8-tetrahydrofolate</name>
        <dbReference type="ChEBI" id="CHEBI:57453"/>
    </ligand>
</feature>
<feature type="site" description="Plays an important role in substrate specificity" evidence="1">
    <location>
        <position position="229"/>
    </location>
</feature>
<feature type="modified residue" description="N6-(pyridoxal phosphate)lysine" evidence="1">
    <location>
        <position position="230"/>
    </location>
</feature>
<sequence>MIFDKGNVEDFDKELWDAIHAEEERQEHHIELIASENMVSKAVMAAQGSVLTNKYAEGYPGNRYYGGTECVDIVETLAIERAKKLFGAAFANVQAHSGSQANAAAYMALIEAGDTVLGMDLAAGGHLTHGSPVNFSGKTYHFVGYSVDADTEMLNYEAILEQAKAVQPKLIVAGASAYSRSIDFEKFRAIADHVGAYLMVDMAHIAGLVAAGVHPSPVPYAHIVTSTTHKTLRGPRGGLILTNDEALAKKINSAIFPGLQGGPLEHVIAAKAVAFKEALDPAFKDYAQAIIDNTAAMAAVFAQDDRFRLISGGTDNHVFLVDVTKVIANGKLAQNLLDEVNITLNKNAIPFETLSPFKTSGIRIGCAAITSRGMGVKESQTIARLIIKALVNHDQETILEEVRQEVRQLTDAFPLYKK</sequence>
<keyword id="KW-0028">Amino-acid biosynthesis</keyword>
<keyword id="KW-0963">Cytoplasm</keyword>
<keyword id="KW-0554">One-carbon metabolism</keyword>
<keyword id="KW-0663">Pyridoxal phosphate</keyword>
<keyword id="KW-0808">Transferase</keyword>
<protein>
    <recommendedName>
        <fullName evidence="1">Serine hydroxymethyltransferase</fullName>
        <shortName evidence="1">SHMT</shortName>
        <shortName evidence="1">Serine methylase</shortName>
        <ecNumber evidence="1">2.1.2.1</ecNumber>
    </recommendedName>
</protein>
<proteinExistence type="inferred from homology"/>
<gene>
    <name evidence="1" type="primary">glyA</name>
    <name type="ordered locus">SpyM50923</name>
</gene>
<organism>
    <name type="scientific">Streptococcus pyogenes serotype M5 (strain Manfredo)</name>
    <dbReference type="NCBI Taxonomy" id="160491"/>
    <lineage>
        <taxon>Bacteria</taxon>
        <taxon>Bacillati</taxon>
        <taxon>Bacillota</taxon>
        <taxon>Bacilli</taxon>
        <taxon>Lactobacillales</taxon>
        <taxon>Streptococcaceae</taxon>
        <taxon>Streptococcus</taxon>
    </lineage>
</organism>
<name>GLYA_STRPG</name>
<accession>A2REH5</accession>
<evidence type="ECO:0000255" key="1">
    <source>
        <dbReference type="HAMAP-Rule" id="MF_00051"/>
    </source>
</evidence>
<comment type="function">
    <text evidence="1">Catalyzes the reversible interconversion of serine and glycine with tetrahydrofolate (THF) serving as the one-carbon carrier. This reaction serves as the major source of one-carbon groups required for the biosynthesis of purines, thymidylate, methionine, and other important biomolecules. Also exhibits THF-independent aldolase activity toward beta-hydroxyamino acids, producing glycine and aldehydes, via a retro-aldol mechanism.</text>
</comment>
<comment type="catalytic activity">
    <reaction evidence="1">
        <text>(6R)-5,10-methylene-5,6,7,8-tetrahydrofolate + glycine + H2O = (6S)-5,6,7,8-tetrahydrofolate + L-serine</text>
        <dbReference type="Rhea" id="RHEA:15481"/>
        <dbReference type="ChEBI" id="CHEBI:15377"/>
        <dbReference type="ChEBI" id="CHEBI:15636"/>
        <dbReference type="ChEBI" id="CHEBI:33384"/>
        <dbReference type="ChEBI" id="CHEBI:57305"/>
        <dbReference type="ChEBI" id="CHEBI:57453"/>
        <dbReference type="EC" id="2.1.2.1"/>
    </reaction>
</comment>
<comment type="cofactor">
    <cofactor evidence="1">
        <name>pyridoxal 5'-phosphate</name>
        <dbReference type="ChEBI" id="CHEBI:597326"/>
    </cofactor>
</comment>
<comment type="pathway">
    <text evidence="1">One-carbon metabolism; tetrahydrofolate interconversion.</text>
</comment>
<comment type="pathway">
    <text evidence="1">Amino-acid biosynthesis; glycine biosynthesis; glycine from L-serine: step 1/1.</text>
</comment>
<comment type="subunit">
    <text evidence="1">Homodimer.</text>
</comment>
<comment type="subcellular location">
    <subcellularLocation>
        <location evidence="1">Cytoplasm</location>
    </subcellularLocation>
</comment>
<comment type="similarity">
    <text evidence="1">Belongs to the SHMT family.</text>
</comment>
<reference key="1">
    <citation type="journal article" date="2007" name="J. Bacteriol.">
        <title>Complete genome of acute rheumatic fever-associated serotype M5 Streptococcus pyogenes strain Manfredo.</title>
        <authorList>
            <person name="Holden M.T.G."/>
            <person name="Scott A."/>
            <person name="Cherevach I."/>
            <person name="Chillingworth T."/>
            <person name="Churcher C."/>
            <person name="Cronin A."/>
            <person name="Dowd L."/>
            <person name="Feltwell T."/>
            <person name="Hamlin N."/>
            <person name="Holroyd S."/>
            <person name="Jagels K."/>
            <person name="Moule S."/>
            <person name="Mungall K."/>
            <person name="Quail M.A."/>
            <person name="Price C."/>
            <person name="Rabbinowitsch E."/>
            <person name="Sharp S."/>
            <person name="Skelton J."/>
            <person name="Whitehead S."/>
            <person name="Barrell B.G."/>
            <person name="Kehoe M."/>
            <person name="Parkhill J."/>
        </authorList>
    </citation>
    <scope>NUCLEOTIDE SEQUENCE [LARGE SCALE GENOMIC DNA]</scope>
    <source>
        <strain>Manfredo</strain>
    </source>
</reference>
<dbReference type="EC" id="2.1.2.1" evidence="1"/>
<dbReference type="EMBL" id="AM295007">
    <property type="protein sequence ID" value="CAM30250.1"/>
    <property type="molecule type" value="Genomic_DNA"/>
</dbReference>
<dbReference type="RefSeq" id="WP_011888877.1">
    <property type="nucleotide sequence ID" value="NC_009332.1"/>
</dbReference>
<dbReference type="SMR" id="A2REH5"/>
<dbReference type="KEGG" id="spf:SpyM50923"/>
<dbReference type="HOGENOM" id="CLU_022477_2_1_9"/>
<dbReference type="UniPathway" id="UPA00193"/>
<dbReference type="UniPathway" id="UPA00288">
    <property type="reaction ID" value="UER01023"/>
</dbReference>
<dbReference type="GO" id="GO:0005829">
    <property type="term" value="C:cytosol"/>
    <property type="evidence" value="ECO:0007669"/>
    <property type="project" value="TreeGrafter"/>
</dbReference>
<dbReference type="GO" id="GO:0004372">
    <property type="term" value="F:glycine hydroxymethyltransferase activity"/>
    <property type="evidence" value="ECO:0007669"/>
    <property type="project" value="UniProtKB-UniRule"/>
</dbReference>
<dbReference type="GO" id="GO:0030170">
    <property type="term" value="F:pyridoxal phosphate binding"/>
    <property type="evidence" value="ECO:0007669"/>
    <property type="project" value="UniProtKB-UniRule"/>
</dbReference>
<dbReference type="GO" id="GO:0019264">
    <property type="term" value="P:glycine biosynthetic process from serine"/>
    <property type="evidence" value="ECO:0007669"/>
    <property type="project" value="UniProtKB-UniRule"/>
</dbReference>
<dbReference type="GO" id="GO:0035999">
    <property type="term" value="P:tetrahydrofolate interconversion"/>
    <property type="evidence" value="ECO:0007669"/>
    <property type="project" value="UniProtKB-UniRule"/>
</dbReference>
<dbReference type="CDD" id="cd00378">
    <property type="entry name" value="SHMT"/>
    <property type="match status" value="1"/>
</dbReference>
<dbReference type="FunFam" id="3.40.640.10:FF:000001">
    <property type="entry name" value="Serine hydroxymethyltransferase"/>
    <property type="match status" value="1"/>
</dbReference>
<dbReference type="Gene3D" id="3.90.1150.10">
    <property type="entry name" value="Aspartate Aminotransferase, domain 1"/>
    <property type="match status" value="1"/>
</dbReference>
<dbReference type="Gene3D" id="3.40.640.10">
    <property type="entry name" value="Type I PLP-dependent aspartate aminotransferase-like (Major domain)"/>
    <property type="match status" value="1"/>
</dbReference>
<dbReference type="HAMAP" id="MF_00051">
    <property type="entry name" value="SHMT"/>
    <property type="match status" value="1"/>
</dbReference>
<dbReference type="InterPro" id="IPR015424">
    <property type="entry name" value="PyrdxlP-dep_Trfase"/>
</dbReference>
<dbReference type="InterPro" id="IPR015421">
    <property type="entry name" value="PyrdxlP-dep_Trfase_major"/>
</dbReference>
<dbReference type="InterPro" id="IPR015422">
    <property type="entry name" value="PyrdxlP-dep_Trfase_small"/>
</dbReference>
<dbReference type="InterPro" id="IPR001085">
    <property type="entry name" value="Ser_HO-MeTrfase"/>
</dbReference>
<dbReference type="InterPro" id="IPR049943">
    <property type="entry name" value="Ser_HO-MeTrfase-like"/>
</dbReference>
<dbReference type="InterPro" id="IPR019798">
    <property type="entry name" value="Ser_HO-MeTrfase_PLP_BS"/>
</dbReference>
<dbReference type="InterPro" id="IPR039429">
    <property type="entry name" value="SHMT-like_dom"/>
</dbReference>
<dbReference type="NCBIfam" id="NF000586">
    <property type="entry name" value="PRK00011.1"/>
    <property type="match status" value="1"/>
</dbReference>
<dbReference type="PANTHER" id="PTHR11680">
    <property type="entry name" value="SERINE HYDROXYMETHYLTRANSFERASE"/>
    <property type="match status" value="1"/>
</dbReference>
<dbReference type="PANTHER" id="PTHR11680:SF35">
    <property type="entry name" value="SERINE HYDROXYMETHYLTRANSFERASE 1"/>
    <property type="match status" value="1"/>
</dbReference>
<dbReference type="Pfam" id="PF00464">
    <property type="entry name" value="SHMT"/>
    <property type="match status" value="1"/>
</dbReference>
<dbReference type="PIRSF" id="PIRSF000412">
    <property type="entry name" value="SHMT"/>
    <property type="match status" value="1"/>
</dbReference>
<dbReference type="SUPFAM" id="SSF53383">
    <property type="entry name" value="PLP-dependent transferases"/>
    <property type="match status" value="1"/>
</dbReference>
<dbReference type="PROSITE" id="PS00096">
    <property type="entry name" value="SHMT"/>
    <property type="match status" value="1"/>
</dbReference>